<accession>Q9CDC4</accession>
<feature type="chain" id="PRO_0000382035" description="Prephenate dehydratase">
    <location>
        <begin position="1"/>
        <end position="322"/>
    </location>
</feature>
<feature type="domain" description="Prephenate dehydratase" evidence="2">
    <location>
        <begin position="5"/>
        <end position="191"/>
    </location>
</feature>
<feature type="domain" description="ACT" evidence="3">
    <location>
        <begin position="205"/>
        <end position="282"/>
    </location>
</feature>
<feature type="region of interest" description="Disordered" evidence="4">
    <location>
        <begin position="286"/>
        <end position="322"/>
    </location>
</feature>
<feature type="site" description="Essential for activity" evidence="1">
    <location>
        <position position="184"/>
    </location>
</feature>
<reference key="1">
    <citation type="journal article" date="2001" name="Nature">
        <title>Massive gene decay in the leprosy bacillus.</title>
        <authorList>
            <person name="Cole S.T."/>
            <person name="Eiglmeier K."/>
            <person name="Parkhill J."/>
            <person name="James K.D."/>
            <person name="Thomson N.R."/>
            <person name="Wheeler P.R."/>
            <person name="Honore N."/>
            <person name="Garnier T."/>
            <person name="Churcher C.M."/>
            <person name="Harris D.E."/>
            <person name="Mungall K.L."/>
            <person name="Basham D."/>
            <person name="Brown D."/>
            <person name="Chillingworth T."/>
            <person name="Connor R."/>
            <person name="Davies R.M."/>
            <person name="Devlin K."/>
            <person name="Duthoy S."/>
            <person name="Feltwell T."/>
            <person name="Fraser A."/>
            <person name="Hamlin N."/>
            <person name="Holroyd S."/>
            <person name="Hornsby T."/>
            <person name="Jagels K."/>
            <person name="Lacroix C."/>
            <person name="Maclean J."/>
            <person name="Moule S."/>
            <person name="Murphy L.D."/>
            <person name="Oliver K."/>
            <person name="Quail M.A."/>
            <person name="Rajandream M.A."/>
            <person name="Rutherford K.M."/>
            <person name="Rutter S."/>
            <person name="Seeger K."/>
            <person name="Simon S."/>
            <person name="Simmonds M."/>
            <person name="Skelton J."/>
            <person name="Squares R."/>
            <person name="Squares S."/>
            <person name="Stevens K."/>
            <person name="Taylor K."/>
            <person name="Whitehead S."/>
            <person name="Woodward J.R."/>
            <person name="Barrell B.G."/>
        </authorList>
    </citation>
    <scope>NUCLEOTIDE SEQUENCE [LARGE SCALE GENOMIC DNA]</scope>
    <source>
        <strain>TN</strain>
    </source>
</reference>
<sequence length="322" mass="33549">MSVARIAYLGPEGTFTEAALLRMTAAGLVPDTGPDGLRRWPTESTPAALDAVRGGAADYACVPIENSIDGSVAPTLDNLAIGSPLQVFAETTLDVEFNIVVKPGITAADIRTLAAFPVAAAQVRQWLAAHLAGAELRPAYSNADAARQVAYGQVDAAVTSPLAATRWGLIALAAGIVDEPNARTRFVLVGMPGPPPARTGTDRTSAVLRIDNAPGMLVAALAEFGIRGIDLTRIESRPTRTELGTYLFFVDCVGHIDDGVVAEALKALHRRCADVCYLGSWPAGLATGPTVSPPPPDEASRWLARLRAGKPDQASEPGGGKL</sequence>
<evidence type="ECO:0000250" key="1"/>
<evidence type="ECO:0000255" key="2">
    <source>
        <dbReference type="PROSITE-ProRule" id="PRU00517"/>
    </source>
</evidence>
<evidence type="ECO:0000255" key="3">
    <source>
        <dbReference type="PROSITE-ProRule" id="PRU01007"/>
    </source>
</evidence>
<evidence type="ECO:0000256" key="4">
    <source>
        <dbReference type="SAM" id="MobiDB-lite"/>
    </source>
</evidence>
<organism>
    <name type="scientific">Mycobacterium leprae (strain TN)</name>
    <dbReference type="NCBI Taxonomy" id="272631"/>
    <lineage>
        <taxon>Bacteria</taxon>
        <taxon>Bacillati</taxon>
        <taxon>Actinomycetota</taxon>
        <taxon>Actinomycetes</taxon>
        <taxon>Mycobacteriales</taxon>
        <taxon>Mycobacteriaceae</taxon>
        <taxon>Mycobacterium</taxon>
    </lineage>
</organism>
<name>PHEA_MYCLE</name>
<keyword id="KW-0028">Amino-acid biosynthesis</keyword>
<keyword id="KW-0057">Aromatic amino acid biosynthesis</keyword>
<keyword id="KW-0456">Lyase</keyword>
<keyword id="KW-0584">Phenylalanine biosynthesis</keyword>
<keyword id="KW-1185">Reference proteome</keyword>
<gene>
    <name type="primary">pheA</name>
    <name type="ordered locus">ML0078</name>
</gene>
<proteinExistence type="inferred from homology"/>
<dbReference type="EC" id="4.2.1.51"/>
<dbReference type="EMBL" id="AL583917">
    <property type="protein sequence ID" value="CAC29586.1"/>
    <property type="molecule type" value="Genomic_DNA"/>
</dbReference>
<dbReference type="PIR" id="F86918">
    <property type="entry name" value="F86918"/>
</dbReference>
<dbReference type="RefSeq" id="NP_301183.1">
    <property type="nucleotide sequence ID" value="NC_002677.1"/>
</dbReference>
<dbReference type="SMR" id="Q9CDC4"/>
<dbReference type="STRING" id="272631.gene:17573890"/>
<dbReference type="KEGG" id="mle:ML0078"/>
<dbReference type="PATRIC" id="fig|272631.5.peg.122"/>
<dbReference type="Leproma" id="ML0078"/>
<dbReference type="eggNOG" id="COG0077">
    <property type="taxonomic scope" value="Bacteria"/>
</dbReference>
<dbReference type="HOGENOM" id="CLU_035008_0_0_11"/>
<dbReference type="OrthoDB" id="9802281at2"/>
<dbReference type="UniPathway" id="UPA00121">
    <property type="reaction ID" value="UER00345"/>
</dbReference>
<dbReference type="Proteomes" id="UP000000806">
    <property type="component" value="Chromosome"/>
</dbReference>
<dbReference type="GO" id="GO:0005737">
    <property type="term" value="C:cytoplasm"/>
    <property type="evidence" value="ECO:0007669"/>
    <property type="project" value="TreeGrafter"/>
</dbReference>
<dbReference type="GO" id="GO:0004664">
    <property type="term" value="F:prephenate dehydratase activity"/>
    <property type="evidence" value="ECO:0007669"/>
    <property type="project" value="UniProtKB-EC"/>
</dbReference>
<dbReference type="GO" id="GO:0042803">
    <property type="term" value="F:protein homodimerization activity"/>
    <property type="evidence" value="ECO:0000250"/>
    <property type="project" value="UniProtKB"/>
</dbReference>
<dbReference type="GO" id="GO:0009094">
    <property type="term" value="P:L-phenylalanine biosynthetic process"/>
    <property type="evidence" value="ECO:0007669"/>
    <property type="project" value="UniProtKB-UniPathway"/>
</dbReference>
<dbReference type="CDD" id="cd04905">
    <property type="entry name" value="ACT_CM-PDT"/>
    <property type="match status" value="1"/>
</dbReference>
<dbReference type="CDD" id="cd13632">
    <property type="entry name" value="PBP2_Aa-PDT_like"/>
    <property type="match status" value="1"/>
</dbReference>
<dbReference type="FunFam" id="3.30.70.260:FF:000012">
    <property type="entry name" value="Prephenate dehydratase"/>
    <property type="match status" value="1"/>
</dbReference>
<dbReference type="FunFam" id="3.40.190.10:FF:000064">
    <property type="entry name" value="Prephenate dehydratase"/>
    <property type="match status" value="1"/>
</dbReference>
<dbReference type="FunFam" id="3.40.190.10:FF:000146">
    <property type="entry name" value="Prephenate dehydratase"/>
    <property type="match status" value="1"/>
</dbReference>
<dbReference type="Gene3D" id="3.30.70.260">
    <property type="match status" value="1"/>
</dbReference>
<dbReference type="Gene3D" id="3.40.190.10">
    <property type="entry name" value="Periplasmic binding protein-like II"/>
    <property type="match status" value="2"/>
</dbReference>
<dbReference type="InterPro" id="IPR045865">
    <property type="entry name" value="ACT-like_dom_sf"/>
</dbReference>
<dbReference type="InterPro" id="IPR002912">
    <property type="entry name" value="ACT_dom"/>
</dbReference>
<dbReference type="InterPro" id="IPR008242">
    <property type="entry name" value="Chor_mutase/pphenate_deHydtase"/>
</dbReference>
<dbReference type="InterPro" id="IPR001086">
    <property type="entry name" value="Preph_deHydtase"/>
</dbReference>
<dbReference type="InterPro" id="IPR018528">
    <property type="entry name" value="Preph_deHydtase_CS"/>
</dbReference>
<dbReference type="NCBIfam" id="NF008865">
    <property type="entry name" value="PRK11898.1"/>
    <property type="match status" value="1"/>
</dbReference>
<dbReference type="PANTHER" id="PTHR21022">
    <property type="entry name" value="PREPHENATE DEHYDRATASE P PROTEIN"/>
    <property type="match status" value="1"/>
</dbReference>
<dbReference type="PANTHER" id="PTHR21022:SF19">
    <property type="entry name" value="PREPHENATE DEHYDRATASE-RELATED"/>
    <property type="match status" value="1"/>
</dbReference>
<dbReference type="Pfam" id="PF01842">
    <property type="entry name" value="ACT"/>
    <property type="match status" value="1"/>
</dbReference>
<dbReference type="Pfam" id="PF00800">
    <property type="entry name" value="PDT"/>
    <property type="match status" value="1"/>
</dbReference>
<dbReference type="PIRSF" id="PIRSF001500">
    <property type="entry name" value="Chor_mut_pdt_Ppr"/>
    <property type="match status" value="1"/>
</dbReference>
<dbReference type="SUPFAM" id="SSF55021">
    <property type="entry name" value="ACT-like"/>
    <property type="match status" value="1"/>
</dbReference>
<dbReference type="SUPFAM" id="SSF53850">
    <property type="entry name" value="Periplasmic binding protein-like II"/>
    <property type="match status" value="1"/>
</dbReference>
<dbReference type="PROSITE" id="PS51671">
    <property type="entry name" value="ACT"/>
    <property type="match status" value="1"/>
</dbReference>
<dbReference type="PROSITE" id="PS00858">
    <property type="entry name" value="PREPHENATE_DEHYDR_2"/>
    <property type="match status" value="1"/>
</dbReference>
<dbReference type="PROSITE" id="PS51171">
    <property type="entry name" value="PREPHENATE_DEHYDR_3"/>
    <property type="match status" value="1"/>
</dbReference>
<protein>
    <recommendedName>
        <fullName>Prephenate dehydratase</fullName>
        <shortName>PDT</shortName>
        <ecNumber>4.2.1.51</ecNumber>
    </recommendedName>
</protein>
<comment type="catalytic activity">
    <reaction>
        <text>prephenate + H(+) = 3-phenylpyruvate + CO2 + H2O</text>
        <dbReference type="Rhea" id="RHEA:21648"/>
        <dbReference type="ChEBI" id="CHEBI:15377"/>
        <dbReference type="ChEBI" id="CHEBI:15378"/>
        <dbReference type="ChEBI" id="CHEBI:16526"/>
        <dbReference type="ChEBI" id="CHEBI:18005"/>
        <dbReference type="ChEBI" id="CHEBI:29934"/>
        <dbReference type="EC" id="4.2.1.51"/>
    </reaction>
</comment>
<comment type="pathway">
    <text>Amino-acid biosynthesis; L-phenylalanine biosynthesis; phenylpyruvate from prephenate: step 1/1.</text>
</comment>
<comment type="subunit">
    <text evidence="1">Homodimer.</text>
</comment>